<keyword id="KW-0028">Amino-acid biosynthesis</keyword>
<keyword id="KW-0963">Cytoplasm</keyword>
<keyword id="KW-0368">Histidine biosynthesis</keyword>
<keyword id="KW-1185">Reference proteome</keyword>
<feature type="chain" id="PRO_1000076244" description="ATP phosphoribosyltransferase regulatory subunit">
    <location>
        <begin position="1"/>
        <end position="391"/>
    </location>
</feature>
<name>HISZ_CLOK5</name>
<proteinExistence type="inferred from homology"/>
<evidence type="ECO:0000255" key="1">
    <source>
        <dbReference type="HAMAP-Rule" id="MF_00125"/>
    </source>
</evidence>
<accession>A5N7Q4</accession>
<sequence length="391" mass="44476">MANWRKYIPEGTKDILFQECKKKVQVENILREIYINSGFLEVKSPTLEFYDVFNIENSTLPQEKIYKLIDGQGRILALRADMTTPIARIVGTKLRDAVYPLRLCYTSNVYRVNESLNGKNSEITQSGVEVIGIKDINADAEVIIMGIKSLLNCGLENFKIEIGHAEMFKALVEDANLDYEEKEKLRESIDTKNFTALNEILHENKGKFEKSSLNVLKELPKLFGGIEIIEKASCLTCNKRAIKALEDVRKVYEIVESIGLGEYLSVDLGMVYHIDYYTGIIFRGYTQGFGGNILSGGRYDNLIAQFGENKPATGFAIDVDGIIKSLETNGNFSDKNDEKVLVYYNKQNFKEAYERAQSLREKGIVAEITHFDEEKEAREYAHSKNMKFLKI</sequence>
<reference key="1">
    <citation type="journal article" date="2008" name="Proc. Natl. Acad. Sci. U.S.A.">
        <title>The genome of Clostridium kluyveri, a strict anaerobe with unique metabolic features.</title>
        <authorList>
            <person name="Seedorf H."/>
            <person name="Fricke W.F."/>
            <person name="Veith B."/>
            <person name="Brueggemann H."/>
            <person name="Liesegang H."/>
            <person name="Strittmatter A."/>
            <person name="Miethke M."/>
            <person name="Buckel W."/>
            <person name="Hinderberger J."/>
            <person name="Li F."/>
            <person name="Hagemeier C."/>
            <person name="Thauer R.K."/>
            <person name="Gottschalk G."/>
        </authorList>
    </citation>
    <scope>NUCLEOTIDE SEQUENCE [LARGE SCALE GENOMIC DNA]</scope>
    <source>
        <strain>ATCC 8527 / DSM 555 / NBRC 12016 / NCIMB 10680 / K1</strain>
    </source>
</reference>
<dbReference type="EMBL" id="CP000673">
    <property type="protein sequence ID" value="EDK33335.1"/>
    <property type="molecule type" value="Genomic_DNA"/>
</dbReference>
<dbReference type="RefSeq" id="WP_012101680.1">
    <property type="nucleotide sequence ID" value="NC_009706.1"/>
</dbReference>
<dbReference type="SMR" id="A5N7Q4"/>
<dbReference type="STRING" id="431943.CKL_1293"/>
<dbReference type="KEGG" id="ckl:CKL_1293"/>
<dbReference type="eggNOG" id="COG3705">
    <property type="taxonomic scope" value="Bacteria"/>
</dbReference>
<dbReference type="HOGENOM" id="CLU_025113_0_0_9"/>
<dbReference type="UniPathway" id="UPA00031">
    <property type="reaction ID" value="UER00006"/>
</dbReference>
<dbReference type="Proteomes" id="UP000002411">
    <property type="component" value="Chromosome"/>
</dbReference>
<dbReference type="GO" id="GO:0005737">
    <property type="term" value="C:cytoplasm"/>
    <property type="evidence" value="ECO:0007669"/>
    <property type="project" value="UniProtKB-SubCell"/>
</dbReference>
<dbReference type="GO" id="GO:0140096">
    <property type="term" value="F:catalytic activity, acting on a protein"/>
    <property type="evidence" value="ECO:0007669"/>
    <property type="project" value="UniProtKB-ARBA"/>
</dbReference>
<dbReference type="GO" id="GO:0004821">
    <property type="term" value="F:histidine-tRNA ligase activity"/>
    <property type="evidence" value="ECO:0007669"/>
    <property type="project" value="TreeGrafter"/>
</dbReference>
<dbReference type="GO" id="GO:0016740">
    <property type="term" value="F:transferase activity"/>
    <property type="evidence" value="ECO:0007669"/>
    <property type="project" value="UniProtKB-ARBA"/>
</dbReference>
<dbReference type="GO" id="GO:0006427">
    <property type="term" value="P:histidyl-tRNA aminoacylation"/>
    <property type="evidence" value="ECO:0007669"/>
    <property type="project" value="TreeGrafter"/>
</dbReference>
<dbReference type="GO" id="GO:0000105">
    <property type="term" value="P:L-histidine biosynthetic process"/>
    <property type="evidence" value="ECO:0007669"/>
    <property type="project" value="UniProtKB-UniRule"/>
</dbReference>
<dbReference type="CDD" id="cd00773">
    <property type="entry name" value="HisRS-like_core"/>
    <property type="match status" value="1"/>
</dbReference>
<dbReference type="Gene3D" id="3.30.930.10">
    <property type="entry name" value="Bira Bifunctional Protein, Domain 2"/>
    <property type="match status" value="1"/>
</dbReference>
<dbReference type="HAMAP" id="MF_00125">
    <property type="entry name" value="HisZ"/>
    <property type="match status" value="1"/>
</dbReference>
<dbReference type="InterPro" id="IPR045864">
    <property type="entry name" value="aa-tRNA-synth_II/BPL/LPL"/>
</dbReference>
<dbReference type="InterPro" id="IPR041715">
    <property type="entry name" value="HisRS-like_core"/>
</dbReference>
<dbReference type="InterPro" id="IPR004516">
    <property type="entry name" value="HisRS/HisZ"/>
</dbReference>
<dbReference type="InterPro" id="IPR004517">
    <property type="entry name" value="HisZ"/>
</dbReference>
<dbReference type="NCBIfam" id="TIGR00443">
    <property type="entry name" value="hisZ_biosyn_reg"/>
    <property type="match status" value="1"/>
</dbReference>
<dbReference type="NCBIfam" id="NF008936">
    <property type="entry name" value="PRK12292.1-3"/>
    <property type="match status" value="1"/>
</dbReference>
<dbReference type="PANTHER" id="PTHR43707:SF6">
    <property type="entry name" value="ATP PHOSPHORIBOSYLTRANSFERASE REGULATORY SUBUNIT"/>
    <property type="match status" value="1"/>
</dbReference>
<dbReference type="PANTHER" id="PTHR43707">
    <property type="entry name" value="HISTIDYL-TRNA SYNTHETASE"/>
    <property type="match status" value="1"/>
</dbReference>
<dbReference type="Pfam" id="PF13393">
    <property type="entry name" value="tRNA-synt_His"/>
    <property type="match status" value="1"/>
</dbReference>
<dbReference type="PIRSF" id="PIRSF001549">
    <property type="entry name" value="His-tRNA_synth"/>
    <property type="match status" value="1"/>
</dbReference>
<dbReference type="SUPFAM" id="SSF55681">
    <property type="entry name" value="Class II aaRS and biotin synthetases"/>
    <property type="match status" value="1"/>
</dbReference>
<organism>
    <name type="scientific">Clostridium kluyveri (strain ATCC 8527 / DSM 555 / NBRC 12016 / NCIMB 10680 / K1)</name>
    <dbReference type="NCBI Taxonomy" id="431943"/>
    <lineage>
        <taxon>Bacteria</taxon>
        <taxon>Bacillati</taxon>
        <taxon>Bacillota</taxon>
        <taxon>Clostridia</taxon>
        <taxon>Eubacteriales</taxon>
        <taxon>Clostridiaceae</taxon>
        <taxon>Clostridium</taxon>
    </lineage>
</organism>
<protein>
    <recommendedName>
        <fullName evidence="1">ATP phosphoribosyltransferase regulatory subunit</fullName>
    </recommendedName>
</protein>
<gene>
    <name evidence="1" type="primary">hisZ</name>
    <name type="ordered locus">CKL_1293</name>
</gene>
<comment type="function">
    <text evidence="1">Required for the first step of histidine biosynthesis. May allow the feedback regulation of ATP phosphoribosyltransferase activity by histidine.</text>
</comment>
<comment type="pathway">
    <text evidence="1">Amino-acid biosynthesis; L-histidine biosynthesis; L-histidine from 5-phospho-alpha-D-ribose 1-diphosphate: step 1/9.</text>
</comment>
<comment type="subunit">
    <text evidence="1">Heteromultimer composed of HisG and HisZ subunits.</text>
</comment>
<comment type="subcellular location">
    <subcellularLocation>
        <location evidence="1">Cytoplasm</location>
    </subcellularLocation>
</comment>
<comment type="miscellaneous">
    <text>This function is generally fulfilled by the C-terminal part of HisG, which is missing in some bacteria such as this one.</text>
</comment>
<comment type="similarity">
    <text evidence="1">Belongs to the class-II aminoacyl-tRNA synthetase family. HisZ subfamily.</text>
</comment>